<protein>
    <recommendedName>
        <fullName evidence="1">Imidazole glycerol phosphate synthase subunit HisF</fullName>
        <ecNumber evidence="1">4.3.2.10</ecNumber>
    </recommendedName>
    <alternativeName>
        <fullName evidence="1">IGP synthase cyclase subunit</fullName>
    </alternativeName>
    <alternativeName>
        <fullName evidence="1">IGP synthase subunit HisF</fullName>
    </alternativeName>
    <alternativeName>
        <fullName evidence="1">ImGP synthase subunit HisF</fullName>
        <shortName evidence="1">IGPS subunit HisF</shortName>
    </alternativeName>
</protein>
<keyword id="KW-0028">Amino-acid biosynthesis</keyword>
<keyword id="KW-0963">Cytoplasm</keyword>
<keyword id="KW-0368">Histidine biosynthesis</keyword>
<keyword id="KW-0456">Lyase</keyword>
<gene>
    <name evidence="1" type="primary">hisF</name>
    <name type="ordered locus">BCE33L1295</name>
</gene>
<proteinExistence type="inferred from homology"/>
<name>HIS6_BACCZ</name>
<reference key="1">
    <citation type="journal article" date="2006" name="J. Bacteriol.">
        <title>Pathogenomic sequence analysis of Bacillus cereus and Bacillus thuringiensis isolates closely related to Bacillus anthracis.</title>
        <authorList>
            <person name="Han C.S."/>
            <person name="Xie G."/>
            <person name="Challacombe J.F."/>
            <person name="Altherr M.R."/>
            <person name="Bhotika S.S."/>
            <person name="Bruce D."/>
            <person name="Campbell C.S."/>
            <person name="Campbell M.L."/>
            <person name="Chen J."/>
            <person name="Chertkov O."/>
            <person name="Cleland C."/>
            <person name="Dimitrijevic M."/>
            <person name="Doggett N.A."/>
            <person name="Fawcett J.J."/>
            <person name="Glavina T."/>
            <person name="Goodwin L.A."/>
            <person name="Hill K.K."/>
            <person name="Hitchcock P."/>
            <person name="Jackson P.J."/>
            <person name="Keim P."/>
            <person name="Kewalramani A.R."/>
            <person name="Longmire J."/>
            <person name="Lucas S."/>
            <person name="Malfatti S."/>
            <person name="McMurry K."/>
            <person name="Meincke L.J."/>
            <person name="Misra M."/>
            <person name="Moseman B.L."/>
            <person name="Mundt M."/>
            <person name="Munk A.C."/>
            <person name="Okinaka R.T."/>
            <person name="Parson-Quintana B."/>
            <person name="Reilly L.P."/>
            <person name="Richardson P."/>
            <person name="Robinson D.L."/>
            <person name="Rubin E."/>
            <person name="Saunders E."/>
            <person name="Tapia R."/>
            <person name="Tesmer J.G."/>
            <person name="Thayer N."/>
            <person name="Thompson L.S."/>
            <person name="Tice H."/>
            <person name="Ticknor L.O."/>
            <person name="Wills P.L."/>
            <person name="Brettin T.S."/>
            <person name="Gilna P."/>
        </authorList>
    </citation>
    <scope>NUCLEOTIDE SEQUENCE [LARGE SCALE GENOMIC DNA]</scope>
    <source>
        <strain>ZK / E33L</strain>
    </source>
</reference>
<accession>Q63DW8</accession>
<organism>
    <name type="scientific">Bacillus cereus (strain ZK / E33L)</name>
    <dbReference type="NCBI Taxonomy" id="288681"/>
    <lineage>
        <taxon>Bacteria</taxon>
        <taxon>Bacillati</taxon>
        <taxon>Bacillota</taxon>
        <taxon>Bacilli</taxon>
        <taxon>Bacillales</taxon>
        <taxon>Bacillaceae</taxon>
        <taxon>Bacillus</taxon>
        <taxon>Bacillus cereus group</taxon>
    </lineage>
</organism>
<sequence>MLAKRIIPCLDVKEGRVVKGVNFIGLQDVGDPVEIAALYNDAGADEIVFLDITATHEGRKTIIDVVEKTASKVFIPLTVGGGISSVKDMYNLLRAGADKVSINSAAVRNPKLIEEGAQHFGSQCIVVAIDARKVAEGKWNVYVNGGRVDTGMDAIEWAKCVVMLGAGEILLTSMDADGTKNGYDLRLTEEISKSVSVPVIASGGCGHADHIIEVFQKTTVDAALAASIFHYGEATIGGVKRKLRNANVEVRL</sequence>
<feature type="chain" id="PRO_0000142114" description="Imidazole glycerol phosphate synthase subunit HisF">
    <location>
        <begin position="1"/>
        <end position="252"/>
    </location>
</feature>
<feature type="active site" evidence="1">
    <location>
        <position position="11"/>
    </location>
</feature>
<feature type="active site" evidence="1">
    <location>
        <position position="130"/>
    </location>
</feature>
<comment type="function">
    <text evidence="1">IGPS catalyzes the conversion of PRFAR and glutamine to IGP, AICAR and glutamate. The HisF subunit catalyzes the cyclization activity that produces IGP and AICAR from PRFAR using the ammonia provided by the HisH subunit.</text>
</comment>
<comment type="catalytic activity">
    <reaction evidence="1">
        <text>5-[(5-phospho-1-deoxy-D-ribulos-1-ylimino)methylamino]-1-(5-phospho-beta-D-ribosyl)imidazole-4-carboxamide + L-glutamine = D-erythro-1-(imidazol-4-yl)glycerol 3-phosphate + 5-amino-1-(5-phospho-beta-D-ribosyl)imidazole-4-carboxamide + L-glutamate + H(+)</text>
        <dbReference type="Rhea" id="RHEA:24793"/>
        <dbReference type="ChEBI" id="CHEBI:15378"/>
        <dbReference type="ChEBI" id="CHEBI:29985"/>
        <dbReference type="ChEBI" id="CHEBI:58278"/>
        <dbReference type="ChEBI" id="CHEBI:58359"/>
        <dbReference type="ChEBI" id="CHEBI:58475"/>
        <dbReference type="ChEBI" id="CHEBI:58525"/>
        <dbReference type="EC" id="4.3.2.10"/>
    </reaction>
</comment>
<comment type="pathway">
    <text evidence="1">Amino-acid biosynthesis; L-histidine biosynthesis; L-histidine from 5-phospho-alpha-D-ribose 1-diphosphate: step 5/9.</text>
</comment>
<comment type="subunit">
    <text evidence="1">Heterodimer of HisH and HisF.</text>
</comment>
<comment type="subcellular location">
    <subcellularLocation>
        <location evidence="1">Cytoplasm</location>
    </subcellularLocation>
</comment>
<comment type="similarity">
    <text evidence="1">Belongs to the HisA/HisF family.</text>
</comment>
<evidence type="ECO:0000255" key="1">
    <source>
        <dbReference type="HAMAP-Rule" id="MF_01013"/>
    </source>
</evidence>
<dbReference type="EC" id="4.3.2.10" evidence="1"/>
<dbReference type="EMBL" id="CP000001">
    <property type="protein sequence ID" value="AAU18953.1"/>
    <property type="molecule type" value="Genomic_DNA"/>
</dbReference>
<dbReference type="RefSeq" id="WP_000880086.1">
    <property type="nucleotide sequence ID" value="NZ_CP009968.1"/>
</dbReference>
<dbReference type="SMR" id="Q63DW8"/>
<dbReference type="KEGG" id="bcz:BCE33L1295"/>
<dbReference type="PATRIC" id="fig|288681.22.peg.4259"/>
<dbReference type="UniPathway" id="UPA00031">
    <property type="reaction ID" value="UER00010"/>
</dbReference>
<dbReference type="Proteomes" id="UP000002612">
    <property type="component" value="Chromosome"/>
</dbReference>
<dbReference type="GO" id="GO:0005737">
    <property type="term" value="C:cytoplasm"/>
    <property type="evidence" value="ECO:0007669"/>
    <property type="project" value="UniProtKB-SubCell"/>
</dbReference>
<dbReference type="GO" id="GO:0000107">
    <property type="term" value="F:imidazoleglycerol-phosphate synthase activity"/>
    <property type="evidence" value="ECO:0007669"/>
    <property type="project" value="UniProtKB-UniRule"/>
</dbReference>
<dbReference type="GO" id="GO:0016829">
    <property type="term" value="F:lyase activity"/>
    <property type="evidence" value="ECO:0007669"/>
    <property type="project" value="UniProtKB-KW"/>
</dbReference>
<dbReference type="GO" id="GO:0000105">
    <property type="term" value="P:L-histidine biosynthetic process"/>
    <property type="evidence" value="ECO:0007669"/>
    <property type="project" value="UniProtKB-UniRule"/>
</dbReference>
<dbReference type="CDD" id="cd04731">
    <property type="entry name" value="HisF"/>
    <property type="match status" value="1"/>
</dbReference>
<dbReference type="FunFam" id="3.20.20.70:FF:000006">
    <property type="entry name" value="Imidazole glycerol phosphate synthase subunit HisF"/>
    <property type="match status" value="1"/>
</dbReference>
<dbReference type="Gene3D" id="3.20.20.70">
    <property type="entry name" value="Aldolase class I"/>
    <property type="match status" value="1"/>
</dbReference>
<dbReference type="HAMAP" id="MF_01013">
    <property type="entry name" value="HisF"/>
    <property type="match status" value="1"/>
</dbReference>
<dbReference type="InterPro" id="IPR013785">
    <property type="entry name" value="Aldolase_TIM"/>
</dbReference>
<dbReference type="InterPro" id="IPR006062">
    <property type="entry name" value="His_biosynth"/>
</dbReference>
<dbReference type="InterPro" id="IPR004651">
    <property type="entry name" value="HisF"/>
</dbReference>
<dbReference type="InterPro" id="IPR050064">
    <property type="entry name" value="IGPS_HisA/HisF"/>
</dbReference>
<dbReference type="InterPro" id="IPR011060">
    <property type="entry name" value="RibuloseP-bd_barrel"/>
</dbReference>
<dbReference type="NCBIfam" id="TIGR00735">
    <property type="entry name" value="hisF"/>
    <property type="match status" value="1"/>
</dbReference>
<dbReference type="PANTHER" id="PTHR21235:SF2">
    <property type="entry name" value="IMIDAZOLE GLYCEROL PHOSPHATE SYNTHASE HISHF"/>
    <property type="match status" value="1"/>
</dbReference>
<dbReference type="PANTHER" id="PTHR21235">
    <property type="entry name" value="IMIDAZOLE GLYCEROL PHOSPHATE SYNTHASE SUBUNIT HISF/H IGP SYNTHASE SUBUNIT HISF/H"/>
    <property type="match status" value="1"/>
</dbReference>
<dbReference type="Pfam" id="PF00977">
    <property type="entry name" value="His_biosynth"/>
    <property type="match status" value="1"/>
</dbReference>
<dbReference type="SUPFAM" id="SSF51366">
    <property type="entry name" value="Ribulose-phoshate binding barrel"/>
    <property type="match status" value="1"/>
</dbReference>